<feature type="chain" id="PRO_0000038146" description="Large delta antigen">
    <location>
        <begin position="1"/>
        <end position="211"/>
    </location>
</feature>
<feature type="propeptide" id="PRO_0000396676" description="Removed in mature form" evidence="3">
    <location>
        <begin position="212"/>
        <end position="214"/>
    </location>
</feature>
<feature type="domain" description="HDAg" evidence="5">
    <location>
        <begin position="21"/>
        <end position="195"/>
    </location>
</feature>
<feature type="region of interest" description="Dimerization" evidence="4">
    <location>
        <begin position="13"/>
        <end position="60"/>
    </location>
</feature>
<feature type="region of interest" description="Disordered" evidence="6">
    <location>
        <begin position="59"/>
        <end position="214"/>
    </location>
</feature>
<feature type="region of interest" description="RNA-binding" evidence="5">
    <location>
        <begin position="97"/>
        <end position="107"/>
    </location>
</feature>
<feature type="region of interest" description="RNAPII-binding" evidence="5">
    <location>
        <begin position="130"/>
        <end position="195"/>
    </location>
</feature>
<feature type="region of interest" description="RNA-binding" evidence="5">
    <location>
        <begin position="136"/>
        <end position="146"/>
    </location>
</feature>
<feature type="short sequence motif" description="Nuclear localization signal" evidence="3">
    <location>
        <begin position="66"/>
        <end position="75"/>
    </location>
</feature>
<feature type="compositionally biased region" description="Basic and acidic residues" evidence="6">
    <location>
        <begin position="93"/>
        <end position="112"/>
    </location>
</feature>
<feature type="compositionally biased region" description="Gly residues" evidence="6">
    <location>
        <begin position="158"/>
        <end position="167"/>
    </location>
</feature>
<feature type="compositionally biased region" description="Low complexity" evidence="6">
    <location>
        <begin position="205"/>
        <end position="214"/>
    </location>
</feature>
<feature type="modified residue" description="Phosphoserine; by host" evidence="3">
    <location>
        <position position="2"/>
    </location>
</feature>
<feature type="modified residue" description="Omega-N-methylated arginine; by host" evidence="2">
    <location>
        <position position="14"/>
    </location>
</feature>
<feature type="modified residue" description="N6-acetyllysine; by host" evidence="2">
    <location>
        <position position="72"/>
    </location>
</feature>
<feature type="modified residue" description="Phosphoserine; by host" evidence="3">
    <location>
        <position position="123"/>
    </location>
</feature>
<feature type="modified residue" description="Phosphoserine; by host" evidence="3">
    <location>
        <position position="177"/>
    </location>
</feature>
<feature type="modified residue" description="Cysteine methyl ester; by host" evidence="3">
    <location>
        <position position="211"/>
    </location>
</feature>
<feature type="lipid moiety-binding region" description="S-farnesyl cysteine; by host" evidence="3">
    <location>
        <position position="211"/>
    </location>
</feature>
<comment type="function">
    <text evidence="1">Following virus entry into host cell, provides nuclear import of HDV RNPs thanks to its nuclear localization signal. Needs co-infection with hepatitis B virus to provide surface proteins, otherwise there is no packaging or budding. Packages the HDV ribonucleoprotein in hepatitis B virus empty particles. Interacts with both HDV genomic RNA and cytoplasmic tail of HBsAg. May inhibit viral RNA replication (By similarity).</text>
</comment>
<comment type="subunit">
    <text evidence="1">Homodimer. Homooctamer. Interacts with HBV HBsAg. May interact with clathrin to induce virion budding (By similarity).</text>
</comment>
<comment type="subcellular location">
    <subcellularLocation>
        <location>Virion</location>
    </subcellularLocation>
    <subcellularLocation>
        <location>Host nucleus</location>
        <location>Host nucleolus</location>
    </subcellularLocation>
    <text evidence="1">isoprenylated in the cytoplasm, and translocates in the nucleus possibly after phosphorylation. Translocates after to nuclear speckle, then to the ER membrane where interaction with Hepatitis B virus antigene takes place (By similarity).</text>
</comment>
<comment type="PTM">
    <text evidence="1">Prenylated by host farnesyl-transferase in the cytoplasm prior to nucleus translocation.</text>
</comment>
<comment type="PTM">
    <text evidence="1">Phosphorylated at serines by host CK2 and other kinases. phosphorylation does not seem to be important for its function (By similarity).</text>
</comment>
<comment type="RNA editing">
    <location>
        <position position="196" evidence="1"/>
    </location>
    <text evidence="1">Partially edited. RNA editing at this position occurs on the antigenomic strand and consists of a conversion of A to G catalyzed by the cellular enzyme ADAR1. The unedited RNA version gives rise to the small delta antigen (AC P25884), which ends with a nonsense codon at position 196. In the edited version, this amber codon is modified to a tryptophan codon and gives rise to the large delta antigen protein. S-HDAg suppresses editing of non-replicating antigenomic RNA, thereby regulating the extent of editing (By similarity).</text>
</comment>
<comment type="miscellaneous">
    <text>This strain belongs to the genotype I found in North America, Europe, Africa, East and West Asia and the South Pacific.</text>
</comment>
<comment type="similarity">
    <text evidence="7">Belongs to the hepatitis delta antigen family.</text>
</comment>
<dbReference type="EMBL" id="D90193">
    <property type="protein sequence ID" value="BAA14217.1"/>
    <property type="status" value="ALT_TERM"/>
    <property type="molecule type" value="Genomic_RNA"/>
</dbReference>
<dbReference type="SMR" id="P0C6M0"/>
<dbReference type="Proteomes" id="UP000008112">
    <property type="component" value="Genome"/>
</dbReference>
<dbReference type="GO" id="GO:0043657">
    <property type="term" value="C:host cell"/>
    <property type="evidence" value="ECO:0007669"/>
    <property type="project" value="GOC"/>
</dbReference>
<dbReference type="GO" id="GO:0044196">
    <property type="term" value="C:host cell nucleolus"/>
    <property type="evidence" value="ECO:0007669"/>
    <property type="project" value="UniProtKB-SubCell"/>
</dbReference>
<dbReference type="GO" id="GO:0044423">
    <property type="term" value="C:virion component"/>
    <property type="evidence" value="ECO:0007669"/>
    <property type="project" value="UniProtKB-KW"/>
</dbReference>
<dbReference type="GO" id="GO:0003723">
    <property type="term" value="F:RNA binding"/>
    <property type="evidence" value="ECO:0007669"/>
    <property type="project" value="UniProtKB-KW"/>
</dbReference>
<dbReference type="GO" id="GO:0046718">
    <property type="term" value="P:symbiont entry into host cell"/>
    <property type="evidence" value="ECO:0007669"/>
    <property type="project" value="UniProtKB-KW"/>
</dbReference>
<dbReference type="GO" id="GO:0075732">
    <property type="term" value="P:viral penetration into host nucleus"/>
    <property type="evidence" value="ECO:0007669"/>
    <property type="project" value="UniProtKB-KW"/>
</dbReference>
<dbReference type="Gene3D" id="4.10.220.40">
    <property type="entry name" value="Delta antigen, N-terminal"/>
    <property type="match status" value="1"/>
</dbReference>
<dbReference type="InterPro" id="IPR027403">
    <property type="entry name" value="Delta_antigen_N"/>
</dbReference>
<dbReference type="InterPro" id="IPR037517">
    <property type="entry name" value="HDAG_dom"/>
</dbReference>
<dbReference type="InterPro" id="IPR002506">
    <property type="entry name" value="HDV_ag"/>
</dbReference>
<dbReference type="Pfam" id="PF01517">
    <property type="entry name" value="HDV_ag"/>
    <property type="match status" value="1"/>
</dbReference>
<dbReference type="SUPFAM" id="SSF58108">
    <property type="entry name" value="Oligomerization domain of hepatitis delta antigen"/>
    <property type="match status" value="1"/>
</dbReference>
<dbReference type="PROSITE" id="PS51838">
    <property type="entry name" value="HDAG"/>
    <property type="match status" value="1"/>
</dbReference>
<accession>P0C6M0</accession>
<proteinExistence type="inferred from homology"/>
<organism>
    <name type="scientific">Hepatitis delta virus genotype I (isolate Japanese S-2)</name>
    <name type="common">HDV</name>
    <dbReference type="NCBI Taxonomy" id="10428"/>
    <lineage>
        <taxon>Viruses</taxon>
        <taxon>Ribozyviria</taxon>
        <taxon>Kolmioviridae</taxon>
        <taxon>Deltavirus</taxon>
        <taxon>Hepatitis delta virus</taxon>
    </lineage>
</organism>
<keyword id="KW-0007">Acetylation</keyword>
<keyword id="KW-1048">Host nucleus</keyword>
<keyword id="KW-0449">Lipoprotein</keyword>
<keyword id="KW-0488">Methylation</keyword>
<keyword id="KW-0597">Phosphoprotein</keyword>
<keyword id="KW-0636">Prenylation</keyword>
<keyword id="KW-0691">RNA editing</keyword>
<keyword id="KW-0694">RNA-binding</keyword>
<keyword id="KW-1163">Viral penetration into host nucleus</keyword>
<keyword id="KW-0946">Virion</keyword>
<keyword id="KW-1160">Virus entry into host cell</keyword>
<reference key="1">
    <citation type="journal article" date="1990" name="J. Virol.">
        <title>Heterogeneity and evolution rates of delta virus RNA sequences.</title>
        <authorList>
            <person name="Imazeki F."/>
            <person name="Omata M."/>
            <person name="Ohto M."/>
        </authorList>
    </citation>
    <scope>NUCLEOTIDE SEQUENCE [GENOMIC RNA]</scope>
</reference>
<reference key="2">
    <citation type="journal article" date="2005" name="Acta Virol.">
        <title>Hepatitis D.</title>
        <authorList>
            <person name="Husa P."/>
            <person name="Linhartova A."/>
            <person name="Nemecek V."/>
            <person name="Husova L."/>
        </authorList>
    </citation>
    <scope>REVIEW</scope>
</reference>
<reference key="3">
    <citation type="journal article" date="2006" name="Curr. Top. Microbiol. Immunol.">
        <title>Post-translational modification of delta antigen of hepatitis D virus.</title>
        <authorList>
            <person name="Huang W.H."/>
            <person name="Chen C.W."/>
            <person name="Wu H.L."/>
            <person name="Chen P.J."/>
        </authorList>
    </citation>
    <scope>REVIEW</scope>
</reference>
<evidence type="ECO:0000250" key="1"/>
<evidence type="ECO:0000250" key="2">
    <source>
        <dbReference type="UniProtKB" id="P0C6L3"/>
    </source>
</evidence>
<evidence type="ECO:0000250" key="3">
    <source>
        <dbReference type="UniProtKB" id="P29996"/>
    </source>
</evidence>
<evidence type="ECO:0000255" key="4"/>
<evidence type="ECO:0000255" key="5">
    <source>
        <dbReference type="PROSITE-ProRule" id="PRU01183"/>
    </source>
</evidence>
<evidence type="ECO:0000256" key="6">
    <source>
        <dbReference type="SAM" id="MobiDB-lite"/>
    </source>
</evidence>
<evidence type="ECO:0000305" key="7"/>
<organismHost>
    <name type="scientific">Homo sapiens</name>
    <name type="common">Human</name>
    <dbReference type="NCBI Taxonomy" id="9606"/>
</organismHost>
<sequence length="214" mass="24070">MSQSETRRGRRGTREETLEKWITARKKAEELEKDLRKARKTIKKLEEENPWLGNILGIIRKGKDGEGAPPAKRPRTDQMEVDSGPGKRPHKSGFTDKEREDHRRRKALENKKKQLSAGGKILSKEEEEELRRLTDEDEERKRRVAGPRVGDVNPSRGGPRGAPGGGFVPQMAGVPESPFSRTGEGLDIRGTQGFPWVSPSPPQQRLPLLECTPQ</sequence>
<protein>
    <recommendedName>
        <fullName>Large delta antigen</fullName>
        <shortName>L-HDAg</shortName>
    </recommendedName>
    <alternativeName>
        <fullName>p27</fullName>
    </alternativeName>
</protein>
<name>LHDAG_HDVS2</name>